<sequence length="67" mass="7633">MKPDIHPDYHEVAVTCSCGNNFKTRSTYQGSELNVEVCSACHPFFTGKQKIMDTAGQVDKFRRRYGM</sequence>
<protein>
    <recommendedName>
        <fullName evidence="1">Large ribosomal subunit protein bL31</fullName>
    </recommendedName>
    <alternativeName>
        <fullName evidence="2">50S ribosomal protein L31</fullName>
    </alternativeName>
</protein>
<feature type="chain" id="PRO_1000176976" description="Large ribosomal subunit protein bL31">
    <location>
        <begin position="1"/>
        <end position="67"/>
    </location>
</feature>
<feature type="binding site" evidence="1">
    <location>
        <position position="16"/>
    </location>
    <ligand>
        <name>Zn(2+)</name>
        <dbReference type="ChEBI" id="CHEBI:29105"/>
    </ligand>
</feature>
<feature type="binding site" evidence="1">
    <location>
        <position position="18"/>
    </location>
    <ligand>
        <name>Zn(2+)</name>
        <dbReference type="ChEBI" id="CHEBI:29105"/>
    </ligand>
</feature>
<feature type="binding site" evidence="1">
    <location>
        <position position="38"/>
    </location>
    <ligand>
        <name>Zn(2+)</name>
        <dbReference type="ChEBI" id="CHEBI:29105"/>
    </ligand>
</feature>
<feature type="binding site" evidence="1">
    <location>
        <position position="41"/>
    </location>
    <ligand>
        <name>Zn(2+)</name>
        <dbReference type="ChEBI" id="CHEBI:29105"/>
    </ligand>
</feature>
<comment type="function">
    <text evidence="1">Binds the 23S rRNA.</text>
</comment>
<comment type="cofactor">
    <cofactor evidence="1">
        <name>Zn(2+)</name>
        <dbReference type="ChEBI" id="CHEBI:29105"/>
    </cofactor>
    <text evidence="1">Binds 1 zinc ion per subunit.</text>
</comment>
<comment type="subunit">
    <text evidence="1">Part of the 50S ribosomal subunit.</text>
</comment>
<comment type="similarity">
    <text evidence="1">Belongs to the bacterial ribosomal protein bL31 family. Type A subfamily.</text>
</comment>
<organism>
    <name type="scientific">Thioalkalivibrio sulfidiphilus (strain HL-EbGR7)</name>
    <dbReference type="NCBI Taxonomy" id="396588"/>
    <lineage>
        <taxon>Bacteria</taxon>
        <taxon>Pseudomonadati</taxon>
        <taxon>Pseudomonadota</taxon>
        <taxon>Gammaproteobacteria</taxon>
        <taxon>Chromatiales</taxon>
        <taxon>Ectothiorhodospiraceae</taxon>
        <taxon>Thioalkalivibrio</taxon>
    </lineage>
</organism>
<dbReference type="EMBL" id="CP001339">
    <property type="protein sequence ID" value="ACL74039.1"/>
    <property type="molecule type" value="Genomic_DNA"/>
</dbReference>
<dbReference type="RefSeq" id="WP_012639502.1">
    <property type="nucleotide sequence ID" value="NC_011901.1"/>
</dbReference>
<dbReference type="SMR" id="B8GPB9"/>
<dbReference type="STRING" id="396588.Tgr7_2967"/>
<dbReference type="KEGG" id="tgr:Tgr7_2967"/>
<dbReference type="eggNOG" id="COG0254">
    <property type="taxonomic scope" value="Bacteria"/>
</dbReference>
<dbReference type="HOGENOM" id="CLU_114306_4_0_6"/>
<dbReference type="OrthoDB" id="9803251at2"/>
<dbReference type="Proteomes" id="UP000002383">
    <property type="component" value="Chromosome"/>
</dbReference>
<dbReference type="GO" id="GO:1990904">
    <property type="term" value="C:ribonucleoprotein complex"/>
    <property type="evidence" value="ECO:0007669"/>
    <property type="project" value="UniProtKB-KW"/>
</dbReference>
<dbReference type="GO" id="GO:0005840">
    <property type="term" value="C:ribosome"/>
    <property type="evidence" value="ECO:0007669"/>
    <property type="project" value="UniProtKB-KW"/>
</dbReference>
<dbReference type="GO" id="GO:0046872">
    <property type="term" value="F:metal ion binding"/>
    <property type="evidence" value="ECO:0007669"/>
    <property type="project" value="UniProtKB-KW"/>
</dbReference>
<dbReference type="GO" id="GO:0019843">
    <property type="term" value="F:rRNA binding"/>
    <property type="evidence" value="ECO:0007669"/>
    <property type="project" value="UniProtKB-KW"/>
</dbReference>
<dbReference type="GO" id="GO:0003735">
    <property type="term" value="F:structural constituent of ribosome"/>
    <property type="evidence" value="ECO:0007669"/>
    <property type="project" value="InterPro"/>
</dbReference>
<dbReference type="GO" id="GO:0006412">
    <property type="term" value="P:translation"/>
    <property type="evidence" value="ECO:0007669"/>
    <property type="project" value="UniProtKB-UniRule"/>
</dbReference>
<dbReference type="Gene3D" id="4.10.830.30">
    <property type="entry name" value="Ribosomal protein L31"/>
    <property type="match status" value="1"/>
</dbReference>
<dbReference type="HAMAP" id="MF_00501">
    <property type="entry name" value="Ribosomal_bL31_1"/>
    <property type="match status" value="1"/>
</dbReference>
<dbReference type="InterPro" id="IPR034704">
    <property type="entry name" value="Ribosomal_bL28/bL31-like_sf"/>
</dbReference>
<dbReference type="InterPro" id="IPR002150">
    <property type="entry name" value="Ribosomal_bL31"/>
</dbReference>
<dbReference type="InterPro" id="IPR027491">
    <property type="entry name" value="Ribosomal_bL31_A"/>
</dbReference>
<dbReference type="InterPro" id="IPR042105">
    <property type="entry name" value="Ribosomal_bL31_sf"/>
</dbReference>
<dbReference type="NCBIfam" id="TIGR00105">
    <property type="entry name" value="L31"/>
    <property type="match status" value="1"/>
</dbReference>
<dbReference type="NCBIfam" id="NF000612">
    <property type="entry name" value="PRK00019.1"/>
    <property type="match status" value="1"/>
</dbReference>
<dbReference type="NCBIfam" id="NF001809">
    <property type="entry name" value="PRK00528.1"/>
    <property type="match status" value="1"/>
</dbReference>
<dbReference type="PANTHER" id="PTHR33280">
    <property type="entry name" value="50S RIBOSOMAL PROTEIN L31, CHLOROPLASTIC"/>
    <property type="match status" value="1"/>
</dbReference>
<dbReference type="PANTHER" id="PTHR33280:SF6">
    <property type="entry name" value="LARGE RIBOSOMAL SUBUNIT PROTEIN BL31A"/>
    <property type="match status" value="1"/>
</dbReference>
<dbReference type="Pfam" id="PF01197">
    <property type="entry name" value="Ribosomal_L31"/>
    <property type="match status" value="1"/>
</dbReference>
<dbReference type="PRINTS" id="PR01249">
    <property type="entry name" value="RIBOSOMALL31"/>
</dbReference>
<dbReference type="SUPFAM" id="SSF143800">
    <property type="entry name" value="L28p-like"/>
    <property type="match status" value="1"/>
</dbReference>
<dbReference type="PROSITE" id="PS01143">
    <property type="entry name" value="RIBOSOMAL_L31"/>
    <property type="match status" value="1"/>
</dbReference>
<accession>B8GPB9</accession>
<evidence type="ECO:0000255" key="1">
    <source>
        <dbReference type="HAMAP-Rule" id="MF_00501"/>
    </source>
</evidence>
<evidence type="ECO:0000305" key="2"/>
<proteinExistence type="inferred from homology"/>
<keyword id="KW-0479">Metal-binding</keyword>
<keyword id="KW-1185">Reference proteome</keyword>
<keyword id="KW-0687">Ribonucleoprotein</keyword>
<keyword id="KW-0689">Ribosomal protein</keyword>
<keyword id="KW-0694">RNA-binding</keyword>
<keyword id="KW-0699">rRNA-binding</keyword>
<keyword id="KW-0862">Zinc</keyword>
<gene>
    <name evidence="1" type="primary">rpmE</name>
    <name type="ordered locus">Tgr7_2967</name>
</gene>
<reference key="1">
    <citation type="journal article" date="2011" name="Stand. Genomic Sci.">
        <title>Complete genome sequence of 'Thioalkalivibrio sulfidophilus' HL-EbGr7.</title>
        <authorList>
            <person name="Muyzer G."/>
            <person name="Sorokin D.Y."/>
            <person name="Mavromatis K."/>
            <person name="Lapidus A."/>
            <person name="Clum A."/>
            <person name="Ivanova N."/>
            <person name="Pati A."/>
            <person name="d'Haeseleer P."/>
            <person name="Woyke T."/>
            <person name="Kyrpides N.C."/>
        </authorList>
    </citation>
    <scope>NUCLEOTIDE SEQUENCE [LARGE SCALE GENOMIC DNA]</scope>
    <source>
        <strain>HL-EbGR7</strain>
    </source>
</reference>
<name>RL31_THISH</name>